<name>RL17_SULSY</name>
<accession>B2V7I4</accession>
<dbReference type="EMBL" id="CP001080">
    <property type="protein sequence ID" value="ACD65907.1"/>
    <property type="molecule type" value="Genomic_DNA"/>
</dbReference>
<dbReference type="RefSeq" id="WP_012458996.1">
    <property type="nucleotide sequence ID" value="NC_010730.1"/>
</dbReference>
<dbReference type="SMR" id="B2V7I4"/>
<dbReference type="STRING" id="436114.SYO3AOP1_0262"/>
<dbReference type="KEGG" id="sul:SYO3AOP1_0262"/>
<dbReference type="eggNOG" id="COG0203">
    <property type="taxonomic scope" value="Bacteria"/>
</dbReference>
<dbReference type="HOGENOM" id="CLU_074407_2_2_0"/>
<dbReference type="GO" id="GO:0022625">
    <property type="term" value="C:cytosolic large ribosomal subunit"/>
    <property type="evidence" value="ECO:0007669"/>
    <property type="project" value="TreeGrafter"/>
</dbReference>
<dbReference type="GO" id="GO:0003735">
    <property type="term" value="F:structural constituent of ribosome"/>
    <property type="evidence" value="ECO:0007669"/>
    <property type="project" value="InterPro"/>
</dbReference>
<dbReference type="GO" id="GO:0006412">
    <property type="term" value="P:translation"/>
    <property type="evidence" value="ECO:0007669"/>
    <property type="project" value="UniProtKB-UniRule"/>
</dbReference>
<dbReference type="Gene3D" id="3.90.1030.10">
    <property type="entry name" value="Ribosomal protein L17"/>
    <property type="match status" value="1"/>
</dbReference>
<dbReference type="HAMAP" id="MF_01368">
    <property type="entry name" value="Ribosomal_bL17"/>
    <property type="match status" value="1"/>
</dbReference>
<dbReference type="InterPro" id="IPR000456">
    <property type="entry name" value="Ribosomal_bL17"/>
</dbReference>
<dbReference type="InterPro" id="IPR036373">
    <property type="entry name" value="Ribosomal_bL17_sf"/>
</dbReference>
<dbReference type="NCBIfam" id="TIGR00059">
    <property type="entry name" value="L17"/>
    <property type="match status" value="1"/>
</dbReference>
<dbReference type="PANTHER" id="PTHR14413:SF16">
    <property type="entry name" value="LARGE RIBOSOMAL SUBUNIT PROTEIN BL17M"/>
    <property type="match status" value="1"/>
</dbReference>
<dbReference type="PANTHER" id="PTHR14413">
    <property type="entry name" value="RIBOSOMAL PROTEIN L17"/>
    <property type="match status" value="1"/>
</dbReference>
<dbReference type="Pfam" id="PF01196">
    <property type="entry name" value="Ribosomal_L17"/>
    <property type="match status" value="1"/>
</dbReference>
<dbReference type="SUPFAM" id="SSF64263">
    <property type="entry name" value="Prokaryotic ribosomal protein L17"/>
    <property type="match status" value="1"/>
</dbReference>
<reference key="1">
    <citation type="journal article" date="2009" name="J. Bacteriol.">
        <title>Complete and draft genome sequences of six members of the Aquificales.</title>
        <authorList>
            <person name="Reysenbach A.-L."/>
            <person name="Hamamura N."/>
            <person name="Podar M."/>
            <person name="Griffiths E."/>
            <person name="Ferreira S."/>
            <person name="Hochstein R."/>
            <person name="Heidelberg J."/>
            <person name="Johnson J."/>
            <person name="Mead D."/>
            <person name="Pohorille A."/>
            <person name="Sarmiento M."/>
            <person name="Schweighofer K."/>
            <person name="Seshadri R."/>
            <person name="Voytek M.A."/>
        </authorList>
    </citation>
    <scope>NUCLEOTIDE SEQUENCE [LARGE SCALE GENOMIC DNA]</scope>
    <source>
        <strain>YO3AOP1</strain>
    </source>
</reference>
<keyword id="KW-0687">Ribonucleoprotein</keyword>
<keyword id="KW-0689">Ribosomal protein</keyword>
<sequence length="121" mass="14068">MRHRVKTKSFHRKKEQREALFINLAKSLILNGKVETTLPKAKALRSFVEKLVTLAKEDTIHSKRLVAQRLKDQKVAKKLYTEIAPLFKERNGGYTRIYKLENRRIGDGGEKALIEFVEYPS</sequence>
<evidence type="ECO:0000255" key="1">
    <source>
        <dbReference type="HAMAP-Rule" id="MF_01368"/>
    </source>
</evidence>
<evidence type="ECO:0000305" key="2"/>
<feature type="chain" id="PRO_1000144494" description="Large ribosomal subunit protein bL17">
    <location>
        <begin position="1"/>
        <end position="121"/>
    </location>
</feature>
<organism>
    <name type="scientific">Sulfurihydrogenibium sp. (strain YO3AOP1)</name>
    <dbReference type="NCBI Taxonomy" id="436114"/>
    <lineage>
        <taxon>Bacteria</taxon>
        <taxon>Pseudomonadati</taxon>
        <taxon>Aquificota</taxon>
        <taxon>Aquificia</taxon>
        <taxon>Aquificales</taxon>
        <taxon>Hydrogenothermaceae</taxon>
        <taxon>Sulfurihydrogenibium</taxon>
    </lineage>
</organism>
<comment type="subunit">
    <text evidence="1">Part of the 50S ribosomal subunit. Contacts protein L32.</text>
</comment>
<comment type="similarity">
    <text evidence="1">Belongs to the bacterial ribosomal protein bL17 family.</text>
</comment>
<proteinExistence type="inferred from homology"/>
<protein>
    <recommendedName>
        <fullName evidence="1">Large ribosomal subunit protein bL17</fullName>
    </recommendedName>
    <alternativeName>
        <fullName evidence="2">50S ribosomal protein L17</fullName>
    </alternativeName>
</protein>
<gene>
    <name evidence="1" type="primary">rplQ</name>
    <name type="ordered locus">SYO3AOP1_0262</name>
</gene>